<evidence type="ECO:0000255" key="1">
    <source>
        <dbReference type="HAMAP-Rule" id="MF_00340"/>
    </source>
</evidence>
<evidence type="ECO:0000305" key="2"/>
<dbReference type="EMBL" id="BA000017">
    <property type="protein sequence ID" value="BAB57290.1"/>
    <property type="molecule type" value="Genomic_DNA"/>
</dbReference>
<dbReference type="RefSeq" id="WP_000290472.1">
    <property type="nucleotide sequence ID" value="NC_002758.2"/>
</dbReference>
<dbReference type="SMR" id="P66209"/>
<dbReference type="GeneID" id="98345444"/>
<dbReference type="KEGG" id="sav:SAV1128"/>
<dbReference type="HOGENOM" id="CLU_129084_1_3_9"/>
<dbReference type="PhylomeDB" id="P66209"/>
<dbReference type="Proteomes" id="UP000002481">
    <property type="component" value="Chromosome"/>
</dbReference>
<dbReference type="GO" id="GO:0015934">
    <property type="term" value="C:large ribosomal subunit"/>
    <property type="evidence" value="ECO:0007669"/>
    <property type="project" value="InterPro"/>
</dbReference>
<dbReference type="GO" id="GO:0003735">
    <property type="term" value="F:structural constituent of ribosome"/>
    <property type="evidence" value="ECO:0007669"/>
    <property type="project" value="InterPro"/>
</dbReference>
<dbReference type="GO" id="GO:0006412">
    <property type="term" value="P:translation"/>
    <property type="evidence" value="ECO:0007669"/>
    <property type="project" value="UniProtKB-UniRule"/>
</dbReference>
<dbReference type="Gene3D" id="1.20.5.640">
    <property type="entry name" value="Single helix bin"/>
    <property type="match status" value="1"/>
</dbReference>
<dbReference type="HAMAP" id="MF_00340">
    <property type="entry name" value="Ribosomal_bL32"/>
    <property type="match status" value="1"/>
</dbReference>
<dbReference type="InterPro" id="IPR002677">
    <property type="entry name" value="Ribosomal_bL32"/>
</dbReference>
<dbReference type="InterPro" id="IPR044957">
    <property type="entry name" value="Ribosomal_bL32_bact"/>
</dbReference>
<dbReference type="InterPro" id="IPR011332">
    <property type="entry name" value="Ribosomal_zn-bd"/>
</dbReference>
<dbReference type="NCBIfam" id="TIGR01031">
    <property type="entry name" value="rpmF_bact"/>
    <property type="match status" value="1"/>
</dbReference>
<dbReference type="PANTHER" id="PTHR35534">
    <property type="entry name" value="50S RIBOSOMAL PROTEIN L32"/>
    <property type="match status" value="1"/>
</dbReference>
<dbReference type="PANTHER" id="PTHR35534:SF2">
    <property type="entry name" value="LARGE RIBOSOMAL SUBUNIT PROTEIN BL32"/>
    <property type="match status" value="1"/>
</dbReference>
<dbReference type="Pfam" id="PF01783">
    <property type="entry name" value="Ribosomal_L32p"/>
    <property type="match status" value="1"/>
</dbReference>
<dbReference type="SUPFAM" id="SSF57829">
    <property type="entry name" value="Zn-binding ribosomal proteins"/>
    <property type="match status" value="1"/>
</dbReference>
<reference key="1">
    <citation type="journal article" date="2001" name="Lancet">
        <title>Whole genome sequencing of meticillin-resistant Staphylococcus aureus.</title>
        <authorList>
            <person name="Kuroda M."/>
            <person name="Ohta T."/>
            <person name="Uchiyama I."/>
            <person name="Baba T."/>
            <person name="Yuzawa H."/>
            <person name="Kobayashi I."/>
            <person name="Cui L."/>
            <person name="Oguchi A."/>
            <person name="Aoki K."/>
            <person name="Nagai Y."/>
            <person name="Lian J.-Q."/>
            <person name="Ito T."/>
            <person name="Kanamori M."/>
            <person name="Matsumaru H."/>
            <person name="Maruyama A."/>
            <person name="Murakami H."/>
            <person name="Hosoyama A."/>
            <person name="Mizutani-Ui Y."/>
            <person name="Takahashi N.K."/>
            <person name="Sawano T."/>
            <person name="Inoue R."/>
            <person name="Kaito C."/>
            <person name="Sekimizu K."/>
            <person name="Hirakawa H."/>
            <person name="Kuhara S."/>
            <person name="Goto S."/>
            <person name="Yabuzaki J."/>
            <person name="Kanehisa M."/>
            <person name="Yamashita A."/>
            <person name="Oshima K."/>
            <person name="Furuya K."/>
            <person name="Yoshino C."/>
            <person name="Shiba T."/>
            <person name="Hattori M."/>
            <person name="Ogasawara N."/>
            <person name="Hayashi H."/>
            <person name="Hiramatsu K."/>
        </authorList>
    </citation>
    <scope>NUCLEOTIDE SEQUENCE [LARGE SCALE GENOMIC DNA]</scope>
    <source>
        <strain>Mu50 / ATCC 700699</strain>
    </source>
</reference>
<accession>P66209</accession>
<accession>Q99UX6</accession>
<proteinExistence type="inferred from homology"/>
<feature type="chain" id="PRO_0000172403" description="Large ribosomal subunit protein bL32">
    <location>
        <begin position="1"/>
        <end position="57"/>
    </location>
</feature>
<keyword id="KW-0687">Ribonucleoprotein</keyword>
<keyword id="KW-0689">Ribosomal protein</keyword>
<name>RL32_STAAM</name>
<gene>
    <name evidence="1" type="primary">rpmF</name>
    <name type="ordered locus">SAV1128</name>
</gene>
<protein>
    <recommendedName>
        <fullName evidence="1">Large ribosomal subunit protein bL32</fullName>
    </recommendedName>
    <alternativeName>
        <fullName evidence="2">50S ribosomal protein L32</fullName>
    </alternativeName>
</protein>
<organism>
    <name type="scientific">Staphylococcus aureus (strain Mu50 / ATCC 700699)</name>
    <dbReference type="NCBI Taxonomy" id="158878"/>
    <lineage>
        <taxon>Bacteria</taxon>
        <taxon>Bacillati</taxon>
        <taxon>Bacillota</taxon>
        <taxon>Bacilli</taxon>
        <taxon>Bacillales</taxon>
        <taxon>Staphylococcaceae</taxon>
        <taxon>Staphylococcus</taxon>
    </lineage>
</organism>
<sequence length="57" mass="6485">MAVPKRRTSKTRKNKRRTHFKISVPGMTECPNCGEYKLSHRVCKNCGSYNGEEVAAK</sequence>
<comment type="similarity">
    <text evidence="1">Belongs to the bacterial ribosomal protein bL32 family.</text>
</comment>